<gene>
    <name type="ordered locus">Rpal_0270</name>
</gene>
<protein>
    <recommendedName>
        <fullName evidence="1">UPF0434 protein Rpal_0270</fullName>
    </recommendedName>
</protein>
<organism>
    <name type="scientific">Rhodopseudomonas palustris (strain TIE-1)</name>
    <dbReference type="NCBI Taxonomy" id="395960"/>
    <lineage>
        <taxon>Bacteria</taxon>
        <taxon>Pseudomonadati</taxon>
        <taxon>Pseudomonadota</taxon>
        <taxon>Alphaproteobacteria</taxon>
        <taxon>Hyphomicrobiales</taxon>
        <taxon>Nitrobacteraceae</taxon>
        <taxon>Rhodopseudomonas</taxon>
    </lineage>
</organism>
<proteinExistence type="inferred from homology"/>
<reference key="1">
    <citation type="submission" date="2008-05" db="EMBL/GenBank/DDBJ databases">
        <title>Complete sequence of Rhodopseudomonas palustris TIE-1.</title>
        <authorList>
            <consortium name="US DOE Joint Genome Institute"/>
            <person name="Lucas S."/>
            <person name="Copeland A."/>
            <person name="Lapidus A."/>
            <person name="Glavina del Rio T."/>
            <person name="Dalin E."/>
            <person name="Tice H."/>
            <person name="Pitluck S."/>
            <person name="Chain P."/>
            <person name="Malfatti S."/>
            <person name="Shin M."/>
            <person name="Vergez L."/>
            <person name="Lang D."/>
            <person name="Schmutz J."/>
            <person name="Larimer F."/>
            <person name="Land M."/>
            <person name="Hauser L."/>
            <person name="Kyrpides N."/>
            <person name="Mikhailova N."/>
            <person name="Emerson D."/>
            <person name="Newman D.K."/>
            <person name="Roden E."/>
            <person name="Richardson P."/>
        </authorList>
    </citation>
    <scope>NUCLEOTIDE SEQUENCE [LARGE SCALE GENOMIC DNA]</scope>
    <source>
        <strain>TIE-1</strain>
    </source>
</reference>
<evidence type="ECO:0000255" key="1">
    <source>
        <dbReference type="HAMAP-Rule" id="MF_01187"/>
    </source>
</evidence>
<comment type="similarity">
    <text evidence="1">Belongs to the UPF0434 family.</text>
</comment>
<sequence>MSLSPSERPDTVDRKLLDILVCPVTKGPLEFDPARQELISRGAKLAYPIRDGIPIMLPEEARKLG</sequence>
<feature type="chain" id="PRO_1000138326" description="UPF0434 protein Rpal_0270">
    <location>
        <begin position="1"/>
        <end position="65"/>
    </location>
</feature>
<dbReference type="EMBL" id="CP001096">
    <property type="protein sequence ID" value="ACE98830.1"/>
    <property type="molecule type" value="Genomic_DNA"/>
</dbReference>
<dbReference type="RefSeq" id="WP_011155837.1">
    <property type="nucleotide sequence ID" value="NC_011004.1"/>
</dbReference>
<dbReference type="SMR" id="B3Q881"/>
<dbReference type="KEGG" id="rpt:Rpal_0270"/>
<dbReference type="HOGENOM" id="CLU_155659_2_0_5"/>
<dbReference type="OrthoDB" id="9812205at2"/>
<dbReference type="Proteomes" id="UP000001725">
    <property type="component" value="Chromosome"/>
</dbReference>
<dbReference type="GO" id="GO:0005829">
    <property type="term" value="C:cytosol"/>
    <property type="evidence" value="ECO:0007669"/>
    <property type="project" value="TreeGrafter"/>
</dbReference>
<dbReference type="FunFam" id="2.20.25.10:FF:000002">
    <property type="entry name" value="UPF0434 protein YcaR"/>
    <property type="match status" value="1"/>
</dbReference>
<dbReference type="Gene3D" id="2.20.25.10">
    <property type="match status" value="1"/>
</dbReference>
<dbReference type="HAMAP" id="MF_01187">
    <property type="entry name" value="UPF0434"/>
    <property type="match status" value="1"/>
</dbReference>
<dbReference type="InterPro" id="IPR005651">
    <property type="entry name" value="Trm112-like"/>
</dbReference>
<dbReference type="PANTHER" id="PTHR33505:SF4">
    <property type="entry name" value="PROTEIN PREY, MITOCHONDRIAL"/>
    <property type="match status" value="1"/>
</dbReference>
<dbReference type="PANTHER" id="PTHR33505">
    <property type="entry name" value="ZGC:162634"/>
    <property type="match status" value="1"/>
</dbReference>
<dbReference type="Pfam" id="PF03966">
    <property type="entry name" value="Trm112p"/>
    <property type="match status" value="1"/>
</dbReference>
<dbReference type="SUPFAM" id="SSF158997">
    <property type="entry name" value="Trm112p-like"/>
    <property type="match status" value="1"/>
</dbReference>
<accession>B3Q881</accession>
<name>Y270_RHOPT</name>